<evidence type="ECO:0000255" key="1">
    <source>
        <dbReference type="HAMAP-Rule" id="MF_00081"/>
    </source>
</evidence>
<proteinExistence type="inferred from homology"/>
<reference key="1">
    <citation type="submission" date="2009-01" db="EMBL/GenBank/DDBJ databases">
        <title>Complete sequence of chromosome of Arthrobacter chlorophenolicus A6.</title>
        <authorList>
            <consortium name="US DOE Joint Genome Institute"/>
            <person name="Lucas S."/>
            <person name="Copeland A."/>
            <person name="Lapidus A."/>
            <person name="Glavina del Rio T."/>
            <person name="Tice H."/>
            <person name="Bruce D."/>
            <person name="Goodwin L."/>
            <person name="Pitluck S."/>
            <person name="Goltsman E."/>
            <person name="Clum A."/>
            <person name="Larimer F."/>
            <person name="Land M."/>
            <person name="Hauser L."/>
            <person name="Kyrpides N."/>
            <person name="Mikhailova N."/>
            <person name="Jansson J."/>
            <person name="Richardson P."/>
        </authorList>
    </citation>
    <scope>NUCLEOTIDE SEQUENCE [LARGE SCALE GENOMIC DNA]</scope>
    <source>
        <strain>ATCC 700700 / DSM 12829 / CIP 107037 / JCM 12360 / KCTC 9906 / NCIMB 13794 / A6</strain>
    </source>
</reference>
<keyword id="KW-0678">Repressor</keyword>
<keyword id="KW-0346">Stress response</keyword>
<keyword id="KW-0804">Transcription</keyword>
<keyword id="KW-0805">Transcription regulation</keyword>
<organism>
    <name type="scientific">Pseudarthrobacter chlorophenolicus (strain ATCC 700700 / DSM 12829 / CIP 107037 / JCM 12360 / KCTC 9906 / NCIMB 13794 / A6)</name>
    <name type="common">Arthrobacter chlorophenolicus</name>
    <dbReference type="NCBI Taxonomy" id="452863"/>
    <lineage>
        <taxon>Bacteria</taxon>
        <taxon>Bacillati</taxon>
        <taxon>Actinomycetota</taxon>
        <taxon>Actinomycetes</taxon>
        <taxon>Micrococcales</taxon>
        <taxon>Micrococcaceae</taxon>
        <taxon>Pseudarthrobacter</taxon>
    </lineage>
</organism>
<accession>B8H8R9</accession>
<comment type="function">
    <text evidence="1">Negative regulator of class I heat shock genes (grpE-dnaK-dnaJ and groELS operons). Prevents heat-shock induction of these operons.</text>
</comment>
<comment type="similarity">
    <text evidence="1">Belongs to the HrcA family.</text>
</comment>
<protein>
    <recommendedName>
        <fullName evidence="1">Heat-inducible transcription repressor HrcA</fullName>
    </recommendedName>
</protein>
<feature type="chain" id="PRO_1000118285" description="Heat-inducible transcription repressor HrcA">
    <location>
        <begin position="1"/>
        <end position="337"/>
    </location>
</feature>
<name>HRCA_PSECP</name>
<sequence>MSEPRKLEVLRAIVEDYVHSREPVGSKALVERHHLGVSSATIRNDMAALEDEGLITAPHTSAGRIPTDKGYRLFVDQISAVKPLSQAERRAIQSLLEGSDDLDDVLDRTVRLLSQLTNQVAVVQYPHLSRALIRHIEFVLLAPRKVLVVLIANSGNVEQRVIDVGQDLADDALSALRTRFLGTLAGTPLARLAQALPAVVSSVSPGERQAAQALAHALEILAHSSREDRMVMAGTANLARSNVDFPLSIGPVLEALEEQVVMLRLLSDMAQDHRGVAVSIGRENPYDGLAEASVVATGYGPDSVAKIGILGPTRMDYPNTMAAVRAVARYLSRILGP</sequence>
<gene>
    <name evidence="1" type="primary">hrcA</name>
    <name type="ordered locus">Achl_1973</name>
</gene>
<dbReference type="EMBL" id="CP001341">
    <property type="protein sequence ID" value="ACL39947.1"/>
    <property type="molecule type" value="Genomic_DNA"/>
</dbReference>
<dbReference type="RefSeq" id="WP_015937166.1">
    <property type="nucleotide sequence ID" value="NC_011886.1"/>
</dbReference>
<dbReference type="SMR" id="B8H8R9"/>
<dbReference type="STRING" id="452863.Achl_1973"/>
<dbReference type="KEGG" id="ach:Achl_1973"/>
<dbReference type="eggNOG" id="COG1420">
    <property type="taxonomic scope" value="Bacteria"/>
</dbReference>
<dbReference type="HOGENOM" id="CLU_050019_2_0_11"/>
<dbReference type="OrthoDB" id="9783139at2"/>
<dbReference type="Proteomes" id="UP000002505">
    <property type="component" value="Chromosome"/>
</dbReference>
<dbReference type="GO" id="GO:0003677">
    <property type="term" value="F:DNA binding"/>
    <property type="evidence" value="ECO:0007669"/>
    <property type="project" value="InterPro"/>
</dbReference>
<dbReference type="GO" id="GO:0003700">
    <property type="term" value="F:DNA-binding transcription factor activity"/>
    <property type="evidence" value="ECO:0007669"/>
    <property type="project" value="InterPro"/>
</dbReference>
<dbReference type="GO" id="GO:0045892">
    <property type="term" value="P:negative regulation of DNA-templated transcription"/>
    <property type="evidence" value="ECO:0007669"/>
    <property type="project" value="UniProtKB-UniRule"/>
</dbReference>
<dbReference type="FunFam" id="1.10.10.10:FF:000049">
    <property type="entry name" value="Heat-inducible transcription repressor HrcA"/>
    <property type="match status" value="1"/>
</dbReference>
<dbReference type="Gene3D" id="3.30.450.40">
    <property type="match status" value="1"/>
</dbReference>
<dbReference type="Gene3D" id="3.30.390.60">
    <property type="entry name" value="Heat-inducible transcription repressor hrca homolog, domain 3"/>
    <property type="match status" value="1"/>
</dbReference>
<dbReference type="Gene3D" id="1.10.10.10">
    <property type="entry name" value="Winged helix-like DNA-binding domain superfamily/Winged helix DNA-binding domain"/>
    <property type="match status" value="1"/>
</dbReference>
<dbReference type="HAMAP" id="MF_00081">
    <property type="entry name" value="HrcA"/>
    <property type="match status" value="1"/>
</dbReference>
<dbReference type="InterPro" id="IPR001034">
    <property type="entry name" value="DeoR_HTH"/>
</dbReference>
<dbReference type="InterPro" id="IPR029016">
    <property type="entry name" value="GAF-like_dom_sf"/>
</dbReference>
<dbReference type="InterPro" id="IPR002571">
    <property type="entry name" value="HrcA"/>
</dbReference>
<dbReference type="InterPro" id="IPR021153">
    <property type="entry name" value="HrcA_C"/>
</dbReference>
<dbReference type="InterPro" id="IPR036388">
    <property type="entry name" value="WH-like_DNA-bd_sf"/>
</dbReference>
<dbReference type="InterPro" id="IPR036390">
    <property type="entry name" value="WH_DNA-bd_sf"/>
</dbReference>
<dbReference type="InterPro" id="IPR023120">
    <property type="entry name" value="WHTH_transcript_rep_HrcA_IDD"/>
</dbReference>
<dbReference type="NCBIfam" id="TIGR00331">
    <property type="entry name" value="hrcA"/>
    <property type="match status" value="1"/>
</dbReference>
<dbReference type="PANTHER" id="PTHR34824">
    <property type="entry name" value="HEAT-INDUCIBLE TRANSCRIPTION REPRESSOR HRCA"/>
    <property type="match status" value="1"/>
</dbReference>
<dbReference type="PANTHER" id="PTHR34824:SF1">
    <property type="entry name" value="HEAT-INDUCIBLE TRANSCRIPTION REPRESSOR HRCA"/>
    <property type="match status" value="1"/>
</dbReference>
<dbReference type="Pfam" id="PF01628">
    <property type="entry name" value="HrcA"/>
    <property type="match status" value="1"/>
</dbReference>
<dbReference type="Pfam" id="PF08220">
    <property type="entry name" value="HTH_DeoR"/>
    <property type="match status" value="1"/>
</dbReference>
<dbReference type="PIRSF" id="PIRSF005485">
    <property type="entry name" value="HrcA"/>
    <property type="match status" value="1"/>
</dbReference>
<dbReference type="SUPFAM" id="SSF55781">
    <property type="entry name" value="GAF domain-like"/>
    <property type="match status" value="1"/>
</dbReference>
<dbReference type="SUPFAM" id="SSF46785">
    <property type="entry name" value="Winged helix' DNA-binding domain"/>
    <property type="match status" value="1"/>
</dbReference>